<sequence length="650" mass="72150">MAGNIFPVPESWAKSAFCDNETYLKMYEQSVKDPEGFWGEHAKRIDWFQPWTKVKSGSFEGDVRFKWFENGKLNVAYNCLDRNLAKRGDQVAIIWEGDDPKVSKYITYRELHDQVCRFANVLKAQGLKKGDRATIYLPMIPELAVAMLACARIGVVHSIVFAGFSPESLAGRILDCGGKVVITADEGLRGGKPIPLKENTEEALKKCPDVQKVIVVKHTGGKVPVVPGRDVDWTEAIKAASPDCPPEVMDAEDPLFILYTSGSTGKPKGVLHTTGGYLVYTALSHQYVFDYHDGDIYWCTADIGWVTGHSYIIYGPLANGATTVMFEGIPNYPDWSRFWNVVDKHKINIFYTAPTAIRALMRQGEAPVRATSRKSLKLLGTVGEPINPEAWLWYYNNVGEQRCPIVDTWWQTETGGILITPLPGATALKPGSATRPFFGVQPAIIDPEGKMLDGPGSGYLIIKESWPGMLRTVYGDHERFKQTYFSNYPGLYFTGDGARRDEDGYYWITGRVDDVINVSGHRLGTAEVESALVAHPAVAESAVVGFPHDIKGQGIYAYVTLKANWEHSDELRQELVKWVRKEIGPIATPDYIQWAPGLPKTRSGKIMRRILRKIAANEIDNLGDTTTLAEPAVVEDLIKNRQAVASSGKA</sequence>
<evidence type="ECO:0000255" key="1">
    <source>
        <dbReference type="HAMAP-Rule" id="MF_01123"/>
    </source>
</evidence>
<keyword id="KW-0007">Acetylation</keyword>
<keyword id="KW-0067">ATP-binding</keyword>
<keyword id="KW-0436">Ligase</keyword>
<keyword id="KW-0460">Magnesium</keyword>
<keyword id="KW-0479">Metal-binding</keyword>
<keyword id="KW-0547">Nucleotide-binding</keyword>
<keyword id="KW-1185">Reference proteome</keyword>
<gene>
    <name evidence="1" type="primary">acsA</name>
    <name type="ordered locus">Sfum_0745</name>
</gene>
<proteinExistence type="inferred from homology"/>
<feature type="chain" id="PRO_1000137278" description="Acetyl-coenzyme A synthetase">
    <location>
        <begin position="1"/>
        <end position="650"/>
    </location>
</feature>
<feature type="binding site" evidence="1">
    <location>
        <begin position="189"/>
        <end position="192"/>
    </location>
    <ligand>
        <name>CoA</name>
        <dbReference type="ChEBI" id="CHEBI:57287"/>
    </ligand>
</feature>
<feature type="binding site" evidence="1">
    <location>
        <position position="307"/>
    </location>
    <ligand>
        <name>CoA</name>
        <dbReference type="ChEBI" id="CHEBI:57287"/>
    </ligand>
</feature>
<feature type="binding site" evidence="1">
    <location>
        <position position="331"/>
    </location>
    <ligand>
        <name>CoA</name>
        <dbReference type="ChEBI" id="CHEBI:57287"/>
    </ligand>
</feature>
<feature type="binding site" evidence="1">
    <location>
        <begin position="383"/>
        <end position="385"/>
    </location>
    <ligand>
        <name>ATP</name>
        <dbReference type="ChEBI" id="CHEBI:30616"/>
    </ligand>
</feature>
<feature type="binding site" evidence="1">
    <location>
        <begin position="407"/>
        <end position="412"/>
    </location>
    <ligand>
        <name>ATP</name>
        <dbReference type="ChEBI" id="CHEBI:30616"/>
    </ligand>
</feature>
<feature type="binding site" evidence="1">
    <location>
        <position position="496"/>
    </location>
    <ligand>
        <name>ATP</name>
        <dbReference type="ChEBI" id="CHEBI:30616"/>
    </ligand>
</feature>
<feature type="binding site" evidence="1">
    <location>
        <position position="511"/>
    </location>
    <ligand>
        <name>ATP</name>
        <dbReference type="ChEBI" id="CHEBI:30616"/>
    </ligand>
</feature>
<feature type="binding site" evidence="1">
    <location>
        <position position="519"/>
    </location>
    <ligand>
        <name>CoA</name>
        <dbReference type="ChEBI" id="CHEBI:57287"/>
    </ligand>
</feature>
<feature type="binding site" evidence="1">
    <location>
        <position position="522"/>
    </location>
    <ligand>
        <name>ATP</name>
        <dbReference type="ChEBI" id="CHEBI:30616"/>
    </ligand>
</feature>
<feature type="binding site" evidence="1">
    <location>
        <position position="533"/>
    </location>
    <ligand>
        <name>Mg(2+)</name>
        <dbReference type="ChEBI" id="CHEBI:18420"/>
    </ligand>
</feature>
<feature type="binding site" evidence="1">
    <location>
        <position position="535"/>
    </location>
    <ligand>
        <name>Mg(2+)</name>
        <dbReference type="ChEBI" id="CHEBI:18420"/>
    </ligand>
</feature>
<feature type="binding site" evidence="1">
    <location>
        <position position="538"/>
    </location>
    <ligand>
        <name>Mg(2+)</name>
        <dbReference type="ChEBI" id="CHEBI:18420"/>
    </ligand>
</feature>
<feature type="binding site" evidence="1">
    <location>
        <position position="580"/>
    </location>
    <ligand>
        <name>CoA</name>
        <dbReference type="ChEBI" id="CHEBI:57287"/>
    </ligand>
</feature>
<feature type="modified residue" description="N6-acetyllysine" evidence="1">
    <location>
        <position position="605"/>
    </location>
</feature>
<protein>
    <recommendedName>
        <fullName evidence="1">Acetyl-coenzyme A synthetase</fullName>
        <shortName evidence="1">AcCoA synthetase</shortName>
        <shortName evidence="1">Acs</shortName>
        <ecNumber evidence="1">6.2.1.1</ecNumber>
    </recommendedName>
    <alternativeName>
        <fullName evidence="1">Acetate--CoA ligase</fullName>
    </alternativeName>
    <alternativeName>
        <fullName evidence="1">Acyl-activating enzyme</fullName>
    </alternativeName>
</protein>
<reference key="1">
    <citation type="submission" date="2006-10" db="EMBL/GenBank/DDBJ databases">
        <title>Complete sequence of Syntrophobacter fumaroxidans MPOB.</title>
        <authorList>
            <consortium name="US DOE Joint Genome Institute"/>
            <person name="Copeland A."/>
            <person name="Lucas S."/>
            <person name="Lapidus A."/>
            <person name="Barry K."/>
            <person name="Detter J.C."/>
            <person name="Glavina del Rio T."/>
            <person name="Hammon N."/>
            <person name="Israni S."/>
            <person name="Pitluck S."/>
            <person name="Goltsman E.G."/>
            <person name="Martinez M."/>
            <person name="Schmutz J."/>
            <person name="Larimer F."/>
            <person name="Land M."/>
            <person name="Hauser L."/>
            <person name="Kyrpides N."/>
            <person name="Kim E."/>
            <person name="Boone D.R."/>
            <person name="Brockman F."/>
            <person name="Culley D."/>
            <person name="Ferry J."/>
            <person name="Gunsalus R."/>
            <person name="McInerney M.J."/>
            <person name="Morrison M."/>
            <person name="Plugge C."/>
            <person name="Rohlin L."/>
            <person name="Scholten J."/>
            <person name="Sieber J."/>
            <person name="Stams A.J.M."/>
            <person name="Worm P."/>
            <person name="Henstra A.M."/>
            <person name="Richardson P."/>
        </authorList>
    </citation>
    <scope>NUCLEOTIDE SEQUENCE [LARGE SCALE GENOMIC DNA]</scope>
    <source>
        <strain>DSM 10017 / MPOB</strain>
    </source>
</reference>
<name>ACSA_SYNFM</name>
<dbReference type="EC" id="6.2.1.1" evidence="1"/>
<dbReference type="EMBL" id="CP000478">
    <property type="protein sequence ID" value="ABK16443.1"/>
    <property type="molecule type" value="Genomic_DNA"/>
</dbReference>
<dbReference type="RefSeq" id="WP_011697616.1">
    <property type="nucleotide sequence ID" value="NC_008554.1"/>
</dbReference>
<dbReference type="SMR" id="A0LG91"/>
<dbReference type="FunCoup" id="A0LG91">
    <property type="interactions" value="494"/>
</dbReference>
<dbReference type="STRING" id="335543.Sfum_0745"/>
<dbReference type="KEGG" id="sfu:Sfum_0745"/>
<dbReference type="eggNOG" id="COG0365">
    <property type="taxonomic scope" value="Bacteria"/>
</dbReference>
<dbReference type="HOGENOM" id="CLU_000022_3_6_7"/>
<dbReference type="InParanoid" id="A0LG91"/>
<dbReference type="OrthoDB" id="9801302at2"/>
<dbReference type="Proteomes" id="UP000001784">
    <property type="component" value="Chromosome"/>
</dbReference>
<dbReference type="GO" id="GO:0005829">
    <property type="term" value="C:cytosol"/>
    <property type="evidence" value="ECO:0007669"/>
    <property type="project" value="TreeGrafter"/>
</dbReference>
<dbReference type="GO" id="GO:0003987">
    <property type="term" value="F:acetate-CoA ligase activity"/>
    <property type="evidence" value="ECO:0007669"/>
    <property type="project" value="UniProtKB-UniRule"/>
</dbReference>
<dbReference type="GO" id="GO:0016208">
    <property type="term" value="F:AMP binding"/>
    <property type="evidence" value="ECO:0007669"/>
    <property type="project" value="InterPro"/>
</dbReference>
<dbReference type="GO" id="GO:0005524">
    <property type="term" value="F:ATP binding"/>
    <property type="evidence" value="ECO:0007669"/>
    <property type="project" value="UniProtKB-KW"/>
</dbReference>
<dbReference type="GO" id="GO:0046872">
    <property type="term" value="F:metal ion binding"/>
    <property type="evidence" value="ECO:0007669"/>
    <property type="project" value="UniProtKB-KW"/>
</dbReference>
<dbReference type="GO" id="GO:0019427">
    <property type="term" value="P:acetyl-CoA biosynthetic process from acetate"/>
    <property type="evidence" value="ECO:0007669"/>
    <property type="project" value="InterPro"/>
</dbReference>
<dbReference type="CDD" id="cd05966">
    <property type="entry name" value="ACS"/>
    <property type="match status" value="1"/>
</dbReference>
<dbReference type="FunFam" id="3.30.300.30:FF:000004">
    <property type="entry name" value="Acetyl-coenzyme A synthetase"/>
    <property type="match status" value="1"/>
</dbReference>
<dbReference type="FunFam" id="3.40.50.12780:FF:000001">
    <property type="entry name" value="Acetyl-coenzyme A synthetase"/>
    <property type="match status" value="1"/>
</dbReference>
<dbReference type="Gene3D" id="3.30.300.30">
    <property type="match status" value="1"/>
</dbReference>
<dbReference type="Gene3D" id="3.40.50.12780">
    <property type="entry name" value="N-terminal domain of ligase-like"/>
    <property type="match status" value="1"/>
</dbReference>
<dbReference type="HAMAP" id="MF_01123">
    <property type="entry name" value="Ac_CoA_synth"/>
    <property type="match status" value="1"/>
</dbReference>
<dbReference type="InterPro" id="IPR011904">
    <property type="entry name" value="Ac_CoA_lig"/>
</dbReference>
<dbReference type="InterPro" id="IPR032387">
    <property type="entry name" value="ACAS_N"/>
</dbReference>
<dbReference type="InterPro" id="IPR025110">
    <property type="entry name" value="AMP-bd_C"/>
</dbReference>
<dbReference type="InterPro" id="IPR045851">
    <property type="entry name" value="AMP-bd_C_sf"/>
</dbReference>
<dbReference type="InterPro" id="IPR020845">
    <property type="entry name" value="AMP-binding_CS"/>
</dbReference>
<dbReference type="InterPro" id="IPR000873">
    <property type="entry name" value="AMP-dep_synth/lig_dom"/>
</dbReference>
<dbReference type="InterPro" id="IPR042099">
    <property type="entry name" value="ANL_N_sf"/>
</dbReference>
<dbReference type="NCBIfam" id="TIGR02188">
    <property type="entry name" value="Ac_CoA_lig_AcsA"/>
    <property type="match status" value="1"/>
</dbReference>
<dbReference type="NCBIfam" id="NF001208">
    <property type="entry name" value="PRK00174.1"/>
    <property type="match status" value="1"/>
</dbReference>
<dbReference type="PANTHER" id="PTHR24095">
    <property type="entry name" value="ACETYL-COENZYME A SYNTHETASE"/>
    <property type="match status" value="1"/>
</dbReference>
<dbReference type="PANTHER" id="PTHR24095:SF14">
    <property type="entry name" value="ACETYL-COENZYME A SYNTHETASE 1"/>
    <property type="match status" value="1"/>
</dbReference>
<dbReference type="Pfam" id="PF16177">
    <property type="entry name" value="ACAS_N"/>
    <property type="match status" value="1"/>
</dbReference>
<dbReference type="Pfam" id="PF00501">
    <property type="entry name" value="AMP-binding"/>
    <property type="match status" value="1"/>
</dbReference>
<dbReference type="Pfam" id="PF13193">
    <property type="entry name" value="AMP-binding_C"/>
    <property type="match status" value="1"/>
</dbReference>
<dbReference type="SUPFAM" id="SSF56801">
    <property type="entry name" value="Acetyl-CoA synthetase-like"/>
    <property type="match status" value="1"/>
</dbReference>
<dbReference type="PROSITE" id="PS00455">
    <property type="entry name" value="AMP_BINDING"/>
    <property type="match status" value="1"/>
</dbReference>
<comment type="function">
    <text evidence="1">Catalyzes the conversion of acetate into acetyl-CoA (AcCoA), an essential intermediate at the junction of anabolic and catabolic pathways. AcsA undergoes a two-step reaction. In the first half reaction, AcsA combines acetate with ATP to form acetyl-adenylate (AcAMP) intermediate. In the second half reaction, it can then transfer the acetyl group from AcAMP to the sulfhydryl group of CoA, forming the product AcCoA.</text>
</comment>
<comment type="catalytic activity">
    <reaction evidence="1">
        <text>acetate + ATP + CoA = acetyl-CoA + AMP + diphosphate</text>
        <dbReference type="Rhea" id="RHEA:23176"/>
        <dbReference type="ChEBI" id="CHEBI:30089"/>
        <dbReference type="ChEBI" id="CHEBI:30616"/>
        <dbReference type="ChEBI" id="CHEBI:33019"/>
        <dbReference type="ChEBI" id="CHEBI:57287"/>
        <dbReference type="ChEBI" id="CHEBI:57288"/>
        <dbReference type="ChEBI" id="CHEBI:456215"/>
        <dbReference type="EC" id="6.2.1.1"/>
    </reaction>
</comment>
<comment type="cofactor">
    <cofactor evidence="1">
        <name>Mg(2+)</name>
        <dbReference type="ChEBI" id="CHEBI:18420"/>
    </cofactor>
</comment>
<comment type="PTM">
    <text evidence="1">Acetylated. Deacetylation by the SIR2-homolog deacetylase activates the enzyme.</text>
</comment>
<comment type="similarity">
    <text evidence="1">Belongs to the ATP-dependent AMP-binding enzyme family.</text>
</comment>
<accession>A0LG91</accession>
<organism>
    <name type="scientific">Syntrophobacter fumaroxidans (strain DSM 10017 / MPOB)</name>
    <dbReference type="NCBI Taxonomy" id="335543"/>
    <lineage>
        <taxon>Bacteria</taxon>
        <taxon>Pseudomonadati</taxon>
        <taxon>Thermodesulfobacteriota</taxon>
        <taxon>Syntrophobacteria</taxon>
        <taxon>Syntrophobacterales</taxon>
        <taxon>Syntrophobacteraceae</taxon>
        <taxon>Syntrophobacter</taxon>
    </lineage>
</organism>